<sequence length="342" mass="38831">METVRSAPPGDGAAEALLKELERQVQDVVRASSWWERHGVDCAILALSLLALPAGFLCLRAHNILAFATGITILGVCHYTLTVKGSHLATHSALTESKRWSKILMIFFLEVCTAFSAEFAKFNHVNLHHVYTNVVGLGDSSTWKVPLLNRYVYMFLGPLLVPIITPLVALEHLRKEEPRTALRTLGFICLGLYSQYWLFMNVSGFKNPSSALACMLLTRSLLAHPYLHVNIFQHIGLPMFSPDKKPRRIHMMTLGVLNLPRQLVLDWAFGHSLISCHVEHHLFPWLSDHMCLKVKPLVSKFLHEKQLPYNEDSYLARFQLFLSRYEEFMVHVPPITELVGVQ</sequence>
<reference key="1">
    <citation type="journal article" date="2003" name="Hum. Mol. Genet.">
        <title>Mutations in a new scaffold protein Sans cause deafness in Jackson shaker mice.</title>
        <authorList>
            <person name="Kikkawa Y."/>
            <person name="Shitara H."/>
            <person name="Wakana S."/>
            <person name="Kohara Y."/>
            <person name="Takada T."/>
            <person name="Okamoto M."/>
            <person name="Taya C."/>
            <person name="Kamiya K."/>
            <person name="Yoshikawa Y."/>
            <person name="Tokano H."/>
            <person name="Kitamura K."/>
            <person name="Shimizu K."/>
            <person name="Wakabayashi Y."/>
            <person name="Shiroishi T."/>
            <person name="Kominami R."/>
            <person name="Yonekawa H."/>
        </authorList>
    </citation>
    <scope>NUCLEOTIDE SEQUENCE [GENOMIC DNA / MRNA] (ISOFORM 1)</scope>
</reference>
<reference key="2">
    <citation type="journal article" date="2009" name="PLoS Biol.">
        <title>Lineage-specific biology revealed by a finished genome assembly of the mouse.</title>
        <authorList>
            <person name="Church D.M."/>
            <person name="Goodstadt L."/>
            <person name="Hillier L.W."/>
            <person name="Zody M.C."/>
            <person name="Goldstein S."/>
            <person name="She X."/>
            <person name="Bult C.J."/>
            <person name="Agarwala R."/>
            <person name="Cherry J.L."/>
            <person name="DiCuccio M."/>
            <person name="Hlavina W."/>
            <person name="Kapustin Y."/>
            <person name="Meric P."/>
            <person name="Maglott D."/>
            <person name="Birtle Z."/>
            <person name="Marques A.C."/>
            <person name="Graves T."/>
            <person name="Zhou S."/>
            <person name="Teague B."/>
            <person name="Potamousis K."/>
            <person name="Churas C."/>
            <person name="Place M."/>
            <person name="Herschleb J."/>
            <person name="Runnheim R."/>
            <person name="Forrest D."/>
            <person name="Amos-Landgraf J."/>
            <person name="Schwartz D.C."/>
            <person name="Cheng Z."/>
            <person name="Lindblad-Toh K."/>
            <person name="Eichler E.E."/>
            <person name="Ponting C.P."/>
        </authorList>
    </citation>
    <scope>NUCLEOTIDE SEQUENCE [LARGE SCALE GENOMIC DNA]</scope>
    <source>
        <strain>C57BL/6J</strain>
    </source>
</reference>
<reference key="3">
    <citation type="journal article" date="2004" name="Genome Res.">
        <title>The status, quality, and expansion of the NIH full-length cDNA project: the Mammalian Gene Collection (MGC).</title>
        <authorList>
            <consortium name="The MGC Project Team"/>
        </authorList>
    </citation>
    <scope>NUCLEOTIDE SEQUENCE [LARGE SCALE MRNA] (ISOFORM 1)</scope>
    <scope>NUCLEOTIDE SEQUENCE [LARGE SCALE MRNA] OF 25-342 (ISOFORM 2)</scope>
    <source>
        <tissue>Brain</tissue>
        <tissue>Eye</tissue>
    </source>
</reference>
<accession>Q80UG1</accession>
<accession>Q80YA0</accession>
<accession>Q810B5</accession>
<evidence type="ECO:0000255" key="1"/>
<evidence type="ECO:0000303" key="2">
    <source>
    </source>
</evidence>
<evidence type="ECO:0000305" key="3"/>
<feature type="chain" id="PRO_0000341547" description="Fatty acid desaturase 6">
    <location>
        <begin position="1"/>
        <end position="342"/>
    </location>
</feature>
<feature type="transmembrane region" description="Helical" evidence="1">
    <location>
        <begin position="39"/>
        <end position="59"/>
    </location>
</feature>
<feature type="transmembrane region" description="Helical" evidence="1">
    <location>
        <begin position="63"/>
        <end position="83"/>
    </location>
</feature>
<feature type="transmembrane region" description="Helical" evidence="1">
    <location>
        <begin position="100"/>
        <end position="120"/>
    </location>
</feature>
<feature type="transmembrane region" description="Helical" evidence="1">
    <location>
        <begin position="151"/>
        <end position="171"/>
    </location>
</feature>
<feature type="transmembrane region" description="Helical" evidence="1">
    <location>
        <begin position="185"/>
        <end position="205"/>
    </location>
</feature>
<feature type="short sequence motif" description="Histidine box-1">
    <location>
        <begin position="87"/>
        <end position="91"/>
    </location>
</feature>
<feature type="short sequence motif" description="Histidine box-2">
    <location>
        <begin position="124"/>
        <end position="128"/>
    </location>
</feature>
<feature type="short sequence motif" description="Histidine box-3">
    <location>
        <begin position="277"/>
        <end position="281"/>
    </location>
</feature>
<feature type="splice variant" id="VSP_034321" description="In isoform 2." evidence="2">
    <original>QLVLDWAFGHSLISCHVEHHLFPWLSDHMCLKVKPLVSKFLHEKQLPYNEDSYLARFQLFLSRYEEFMVHVPPITELVGVQ</original>
    <variation>GAPPLPLAL</variation>
    <location>
        <begin position="262"/>
        <end position="342"/>
    </location>
</feature>
<feature type="sequence conflict" description="In Ref. 1; BAC67683." evidence="3" ref="1">
    <original>V</original>
    <variation>A</variation>
    <location>
        <position position="29"/>
    </location>
</feature>
<gene>
    <name type="primary">Fads6</name>
</gene>
<organism>
    <name type="scientific">Mus musculus</name>
    <name type="common">Mouse</name>
    <dbReference type="NCBI Taxonomy" id="10090"/>
    <lineage>
        <taxon>Eukaryota</taxon>
        <taxon>Metazoa</taxon>
        <taxon>Chordata</taxon>
        <taxon>Craniata</taxon>
        <taxon>Vertebrata</taxon>
        <taxon>Euteleostomi</taxon>
        <taxon>Mammalia</taxon>
        <taxon>Eutheria</taxon>
        <taxon>Euarchontoglires</taxon>
        <taxon>Glires</taxon>
        <taxon>Rodentia</taxon>
        <taxon>Myomorpha</taxon>
        <taxon>Muroidea</taxon>
        <taxon>Muridae</taxon>
        <taxon>Murinae</taxon>
        <taxon>Mus</taxon>
        <taxon>Mus</taxon>
    </lineage>
</organism>
<comment type="pathway">
    <text>Lipid metabolism; fatty acid metabolism.</text>
</comment>
<comment type="subcellular location">
    <subcellularLocation>
        <location evidence="3">Membrane</location>
        <topology evidence="3">Multi-pass membrane protein</topology>
    </subcellularLocation>
</comment>
<comment type="alternative products">
    <event type="alternative splicing"/>
    <isoform>
        <id>Q80UG1-1</id>
        <name>1</name>
        <sequence type="displayed"/>
    </isoform>
    <isoform>
        <id>Q80UG1-2</id>
        <name>2</name>
        <sequence type="described" ref="VSP_034321"/>
    </isoform>
</comment>
<comment type="similarity">
    <text evidence="3">Belongs to the fatty acid desaturase type 1 family.</text>
</comment>
<name>FADS6_MOUSE</name>
<protein>
    <recommendedName>
        <fullName>Fatty acid desaturase 6</fullName>
        <ecNumber>1.14.19.-</ecNumber>
    </recommendedName>
</protein>
<proteinExistence type="evidence at transcript level"/>
<keyword id="KW-0025">Alternative splicing</keyword>
<keyword id="KW-0275">Fatty acid biosynthesis</keyword>
<keyword id="KW-0276">Fatty acid metabolism</keyword>
<keyword id="KW-0444">Lipid biosynthesis</keyword>
<keyword id="KW-0443">Lipid metabolism</keyword>
<keyword id="KW-0472">Membrane</keyword>
<keyword id="KW-0560">Oxidoreductase</keyword>
<keyword id="KW-1185">Reference proteome</keyword>
<keyword id="KW-0812">Transmembrane</keyword>
<keyword id="KW-1133">Transmembrane helix</keyword>
<dbReference type="EC" id="1.14.19.-"/>
<dbReference type="EMBL" id="AB087501">
    <property type="protein sequence ID" value="BAC57425.1"/>
    <property type="molecule type" value="Genomic_DNA"/>
</dbReference>
<dbReference type="EMBL" id="AB087503">
    <property type="protein sequence ID" value="BAC67683.1"/>
    <property type="molecule type" value="mRNA"/>
</dbReference>
<dbReference type="EMBL" id="AL603828">
    <property type="status" value="NOT_ANNOTATED_CDS"/>
    <property type="molecule type" value="Genomic_DNA"/>
</dbReference>
<dbReference type="EMBL" id="BC044804">
    <property type="protein sequence ID" value="AAH44804.1"/>
    <property type="molecule type" value="mRNA"/>
</dbReference>
<dbReference type="EMBL" id="BC132041">
    <property type="protein sequence ID" value="AAI32042.1"/>
    <property type="molecule type" value="mRNA"/>
</dbReference>
<dbReference type="EMBL" id="BC132067">
    <property type="protein sequence ID" value="AAI32068.1"/>
    <property type="molecule type" value="mRNA"/>
</dbReference>
<dbReference type="CCDS" id="CCDS25626.1">
    <molecule id="Q80UG1-1"/>
</dbReference>
<dbReference type="RefSeq" id="NP_828874.3">
    <molecule id="Q80UG1-1"/>
    <property type="nucleotide sequence ID" value="NM_178035.4"/>
</dbReference>
<dbReference type="FunCoup" id="Q80UG1">
    <property type="interactions" value="9"/>
</dbReference>
<dbReference type="STRING" id="10090.ENSMUSP00000058783"/>
<dbReference type="iPTMnet" id="Q80UG1"/>
<dbReference type="PhosphoSitePlus" id="Q80UG1"/>
<dbReference type="PaxDb" id="10090-ENSMUSP00000058783"/>
<dbReference type="ProteomicsDB" id="271719">
    <molecule id="Q80UG1-1"/>
</dbReference>
<dbReference type="ProteomicsDB" id="271720">
    <molecule id="Q80UG1-2"/>
</dbReference>
<dbReference type="Antibodypedia" id="63224">
    <property type="antibodies" value="52 antibodies from 13 providers"/>
</dbReference>
<dbReference type="DNASU" id="328035"/>
<dbReference type="Ensembl" id="ENSMUST00000056153.8">
    <molecule id="Q80UG1-1"/>
    <property type="protein sequence ID" value="ENSMUSP00000058783.8"/>
    <property type="gene ID" value="ENSMUSG00000044788.11"/>
</dbReference>
<dbReference type="GeneID" id="328035"/>
<dbReference type="KEGG" id="mmu:328035"/>
<dbReference type="UCSC" id="uc007mgz.2">
    <molecule id="Q80UG1-1"/>
    <property type="organism name" value="mouse"/>
</dbReference>
<dbReference type="AGR" id="MGI:3039592"/>
<dbReference type="CTD" id="283985"/>
<dbReference type="MGI" id="MGI:3039592">
    <property type="gene designation" value="Fads6"/>
</dbReference>
<dbReference type="VEuPathDB" id="HostDB:ENSMUSG00000044788"/>
<dbReference type="eggNOG" id="ENOG502QQ1J">
    <property type="taxonomic scope" value="Eukaryota"/>
</dbReference>
<dbReference type="GeneTree" id="ENSGT00950000182990"/>
<dbReference type="HOGENOM" id="CLU_047135_0_0_1"/>
<dbReference type="InParanoid" id="Q80UG1"/>
<dbReference type="OMA" id="IHQMTHG"/>
<dbReference type="OrthoDB" id="8734935at2759"/>
<dbReference type="PhylomeDB" id="Q80UG1"/>
<dbReference type="TreeFam" id="TF333083"/>
<dbReference type="UniPathway" id="UPA00199"/>
<dbReference type="BioGRID-ORCS" id="328035">
    <property type="hits" value="4 hits in 82 CRISPR screens"/>
</dbReference>
<dbReference type="PRO" id="PR:Q80UG1"/>
<dbReference type="Proteomes" id="UP000000589">
    <property type="component" value="Chromosome 11"/>
</dbReference>
<dbReference type="RNAct" id="Q80UG1">
    <property type="molecule type" value="protein"/>
</dbReference>
<dbReference type="Bgee" id="ENSMUSG00000044788">
    <property type="expression patterns" value="Expressed in dorsal pancreas and 166 other cell types or tissues"/>
</dbReference>
<dbReference type="GO" id="GO:0016020">
    <property type="term" value="C:membrane"/>
    <property type="evidence" value="ECO:0007669"/>
    <property type="project" value="UniProtKB-SubCell"/>
</dbReference>
<dbReference type="GO" id="GO:0016491">
    <property type="term" value="F:oxidoreductase activity"/>
    <property type="evidence" value="ECO:0007669"/>
    <property type="project" value="UniProtKB-KW"/>
</dbReference>
<dbReference type="GO" id="GO:0006633">
    <property type="term" value="P:fatty acid biosynthetic process"/>
    <property type="evidence" value="ECO:0007669"/>
    <property type="project" value="UniProtKB-KW"/>
</dbReference>
<dbReference type="InterPro" id="IPR005804">
    <property type="entry name" value="FA_desaturase_dom"/>
</dbReference>
<dbReference type="InterPro" id="IPR012171">
    <property type="entry name" value="Fatty_acid_desaturase"/>
</dbReference>
<dbReference type="PANTHER" id="PTHR19353">
    <property type="entry name" value="FATTY ACID DESATURASE 2"/>
    <property type="match status" value="1"/>
</dbReference>
<dbReference type="PANTHER" id="PTHR19353:SF13">
    <property type="entry name" value="FATTY ACID DESATURASE 6"/>
    <property type="match status" value="1"/>
</dbReference>
<dbReference type="Pfam" id="PF00487">
    <property type="entry name" value="FA_desaturase"/>
    <property type="match status" value="1"/>
</dbReference>